<evidence type="ECO:0000255" key="1">
    <source>
        <dbReference type="HAMAP-Rule" id="MF_00576"/>
    </source>
</evidence>
<reference key="1">
    <citation type="journal article" date="2013" name="Plant Physiol.">
        <title>A Nostoc punctiforme Sugar Transporter Necessary to Establish a Cyanobacterium-Plant Symbiosis.</title>
        <authorList>
            <person name="Ekman M."/>
            <person name="Picossi S."/>
            <person name="Campbell E.L."/>
            <person name="Meeks J.C."/>
            <person name="Flores E."/>
        </authorList>
    </citation>
    <scope>NUCLEOTIDE SEQUENCE [LARGE SCALE GENOMIC DNA]</scope>
    <source>
        <strain>ATCC 29133 / PCC 73102</strain>
    </source>
</reference>
<feature type="chain" id="PRO_1000129550" description="Gas vesicle protein A">
    <location>
        <begin position="1"/>
        <end position="73"/>
    </location>
</feature>
<dbReference type="EMBL" id="CP001037">
    <property type="protein sequence ID" value="ACC80763.1"/>
    <property type="molecule type" value="Genomic_DNA"/>
</dbReference>
<dbReference type="RefSeq" id="WP_012408764.1">
    <property type="nucleotide sequence ID" value="NC_010628.1"/>
</dbReference>
<dbReference type="SMR" id="B2J663"/>
<dbReference type="STRING" id="63737.Npun_F2159"/>
<dbReference type="EnsemblBacteria" id="ACC80763">
    <property type="protein sequence ID" value="ACC80763"/>
    <property type="gene ID" value="Npun_F2159"/>
</dbReference>
<dbReference type="KEGG" id="npu:Npun_F2159"/>
<dbReference type="eggNOG" id="ENOG5032YMQ">
    <property type="taxonomic scope" value="Bacteria"/>
</dbReference>
<dbReference type="HOGENOM" id="CLU_169045_1_0_3"/>
<dbReference type="OrthoDB" id="284387at2"/>
<dbReference type="PhylomeDB" id="B2J663"/>
<dbReference type="Proteomes" id="UP000001191">
    <property type="component" value="Chromosome"/>
</dbReference>
<dbReference type="GO" id="GO:0033172">
    <property type="term" value="C:gas vesicle shell"/>
    <property type="evidence" value="ECO:0007669"/>
    <property type="project" value="UniProtKB-UniRule"/>
</dbReference>
<dbReference type="GO" id="GO:0012506">
    <property type="term" value="C:vesicle membrane"/>
    <property type="evidence" value="ECO:0007669"/>
    <property type="project" value="InterPro"/>
</dbReference>
<dbReference type="GO" id="GO:0005198">
    <property type="term" value="F:structural molecule activity"/>
    <property type="evidence" value="ECO:0007669"/>
    <property type="project" value="InterPro"/>
</dbReference>
<dbReference type="HAMAP" id="MF_00576">
    <property type="entry name" value="Gas_vesicle_A"/>
    <property type="match status" value="1"/>
</dbReference>
<dbReference type="InterPro" id="IPR000638">
    <property type="entry name" value="Gas-vesicle_GvpA-like"/>
</dbReference>
<dbReference type="InterPro" id="IPR047870">
    <property type="entry name" value="Gas_vesicle_GvpA"/>
</dbReference>
<dbReference type="InterPro" id="IPR050530">
    <property type="entry name" value="GvpA"/>
</dbReference>
<dbReference type="InterPro" id="IPR018493">
    <property type="entry name" value="GvpA-like_CS"/>
</dbReference>
<dbReference type="NCBIfam" id="NF006874">
    <property type="entry name" value="PRK09371.1"/>
    <property type="match status" value="1"/>
</dbReference>
<dbReference type="PANTHER" id="PTHR35344:SF4">
    <property type="entry name" value="GAS VESICLE PROTEIN A1"/>
    <property type="match status" value="1"/>
</dbReference>
<dbReference type="PANTHER" id="PTHR35344">
    <property type="entry name" value="GAS VESICLE STRUCTURAL PROTEIN 2-RELATED"/>
    <property type="match status" value="1"/>
</dbReference>
<dbReference type="Pfam" id="PF00741">
    <property type="entry name" value="Gas_vesicle"/>
    <property type="match status" value="1"/>
</dbReference>
<dbReference type="PROSITE" id="PS00234">
    <property type="entry name" value="GAS_VESICLE_A_1"/>
    <property type="match status" value="1"/>
</dbReference>
<dbReference type="PROSITE" id="PS00669">
    <property type="entry name" value="GAS_VESICLE_A_2"/>
    <property type="match status" value="1"/>
</dbReference>
<comment type="function">
    <text evidence="1">Gas vesicles are hollow, gas filled proteinaceous nanostructures found in some microorganisms. During planktonic growth they allow positioning of the organism at a favorable depth for light or nutrient acquisition. GvpA forms the protein shell.</text>
</comment>
<comment type="subunit">
    <text evidence="1">The gas vesicle shell is 2 nm thick and consists of a single layer of this protein. It forms helical ribs nearly perpendicular to the long axis of the vesicle.</text>
</comment>
<comment type="subcellular location">
    <subcellularLocation>
        <location evidence="1">Gas vesicle shell</location>
    </subcellularLocation>
</comment>
<comment type="similarity">
    <text evidence="1">Belongs to the gas vesicle GvpA family.</text>
</comment>
<protein>
    <recommendedName>
        <fullName evidence="1">Gas vesicle protein A</fullName>
        <shortName evidence="1">GvpA</shortName>
    </recommendedName>
</protein>
<name>GVPA_NOSP7</name>
<keyword id="KW-0304">Gas vesicle</keyword>
<keyword id="KW-1185">Reference proteome</keyword>
<gene>
    <name evidence="1" type="primary">gvpA</name>
    <name type="ordered locus">Npun_F2159</name>
</gene>
<proteinExistence type="inferred from homology"/>
<organism>
    <name type="scientific">Nostoc punctiforme (strain ATCC 29133 / PCC 73102)</name>
    <dbReference type="NCBI Taxonomy" id="63737"/>
    <lineage>
        <taxon>Bacteria</taxon>
        <taxon>Bacillati</taxon>
        <taxon>Cyanobacteriota</taxon>
        <taxon>Cyanophyceae</taxon>
        <taxon>Nostocales</taxon>
        <taxon>Nostocaceae</taxon>
        <taxon>Nostoc</taxon>
    </lineage>
</organism>
<sequence length="73" mass="7729">MAVEKVNSSSSLAEVIDRILDKGIVIDAWVRVSLVGIELLSIEARIVIASVETYLRYAEAVGLTSQAAVPSAA</sequence>
<accession>B2J663</accession>